<dbReference type="GO" id="GO:0005576">
    <property type="term" value="C:extracellular region"/>
    <property type="evidence" value="ECO:0007669"/>
    <property type="project" value="UniProtKB-KW"/>
</dbReference>
<proteinExistence type="evidence at protein level"/>
<sequence>KPDPEAVLIV</sequence>
<reference evidence="3" key="1">
    <citation type="journal article" date="1997" name="J. Biol. Chem.">
        <title>Differential extraction and protein sequencing reveals major differences in patterns of primary cell wall proteins from plants.</title>
        <authorList>
            <person name="Robertson D."/>
            <person name="Mitchell G.P."/>
            <person name="Gilroy J.S."/>
            <person name="Gerrish C."/>
            <person name="Bolwell G.P."/>
            <person name="Slabas A.R."/>
        </authorList>
    </citation>
    <scope>PROTEIN SEQUENCE</scope>
    <scope>SUBCELLULAR LOCATION</scope>
</reference>
<keyword id="KW-0134">Cell wall</keyword>
<keyword id="KW-0903">Direct protein sequencing</keyword>
<keyword id="KW-0964">Secreted</keyword>
<accession>P80767</accession>
<protein>
    <recommendedName>
        <fullName>46 kDa cell wall protein</fullName>
    </recommendedName>
</protein>
<organism>
    <name type="scientific">Phaseolus vulgaris</name>
    <name type="common">Kidney bean</name>
    <name type="synonym">French bean</name>
    <dbReference type="NCBI Taxonomy" id="3885"/>
    <lineage>
        <taxon>Eukaryota</taxon>
        <taxon>Viridiplantae</taxon>
        <taxon>Streptophyta</taxon>
        <taxon>Embryophyta</taxon>
        <taxon>Tracheophyta</taxon>
        <taxon>Spermatophyta</taxon>
        <taxon>Magnoliopsida</taxon>
        <taxon>eudicotyledons</taxon>
        <taxon>Gunneridae</taxon>
        <taxon>Pentapetalae</taxon>
        <taxon>rosids</taxon>
        <taxon>fabids</taxon>
        <taxon>Fabales</taxon>
        <taxon>Fabaceae</taxon>
        <taxon>Papilionoideae</taxon>
        <taxon>50 kb inversion clade</taxon>
        <taxon>NPAAA clade</taxon>
        <taxon>indigoferoid/millettioid clade</taxon>
        <taxon>Phaseoleae</taxon>
        <taxon>Phaseolus</taxon>
    </lineage>
</organism>
<name>CWP08_PHAVU</name>
<evidence type="ECO:0000269" key="1">
    <source>
    </source>
</evidence>
<evidence type="ECO:0000303" key="2">
    <source>
    </source>
</evidence>
<evidence type="ECO:0000305" key="3"/>
<feature type="chain" id="PRO_0000079651" description="46 kDa cell wall protein">
    <location>
        <begin position="1"/>
        <end position="10" status="greater than"/>
    </location>
</feature>
<feature type="non-terminal residue" evidence="2">
    <location>
        <position position="10"/>
    </location>
</feature>
<comment type="subcellular location">
    <subcellularLocation>
        <location evidence="1">Secreted</location>
        <location evidence="1">Cell wall</location>
    </subcellularLocation>
</comment>